<reference key="1">
    <citation type="journal article" date="2007" name="PLoS Genet.">
        <title>Patterns and implications of gene gain and loss in the evolution of Prochlorococcus.</title>
        <authorList>
            <person name="Kettler G.C."/>
            <person name="Martiny A.C."/>
            <person name="Huang K."/>
            <person name="Zucker J."/>
            <person name="Coleman M.L."/>
            <person name="Rodrigue S."/>
            <person name="Chen F."/>
            <person name="Lapidus A."/>
            <person name="Ferriera S."/>
            <person name="Johnson J."/>
            <person name="Steglich C."/>
            <person name="Church G.M."/>
            <person name="Richardson P."/>
            <person name="Chisholm S.W."/>
        </authorList>
    </citation>
    <scope>NUCLEOTIDE SEQUENCE [LARGE SCALE GENOMIC DNA]</scope>
    <source>
        <strain>NATL2A</strain>
    </source>
</reference>
<dbReference type="EC" id="2.7.8.13" evidence="1"/>
<dbReference type="EMBL" id="CP000095">
    <property type="protein sequence ID" value="AAZ58809.1"/>
    <property type="molecule type" value="Genomic_DNA"/>
</dbReference>
<dbReference type="RefSeq" id="WP_011295663.1">
    <property type="nucleotide sequence ID" value="NC_007335.2"/>
</dbReference>
<dbReference type="SMR" id="Q46I69"/>
<dbReference type="STRING" id="59920.PMN2A_1320"/>
<dbReference type="KEGG" id="pmn:PMN2A_1320"/>
<dbReference type="HOGENOM" id="CLU_023982_0_2_3"/>
<dbReference type="OrthoDB" id="9805475at2"/>
<dbReference type="PhylomeDB" id="Q46I69"/>
<dbReference type="UniPathway" id="UPA00219"/>
<dbReference type="Proteomes" id="UP000002535">
    <property type="component" value="Chromosome"/>
</dbReference>
<dbReference type="GO" id="GO:0005886">
    <property type="term" value="C:plasma membrane"/>
    <property type="evidence" value="ECO:0007669"/>
    <property type="project" value="UniProtKB-SubCell"/>
</dbReference>
<dbReference type="GO" id="GO:0046872">
    <property type="term" value="F:metal ion binding"/>
    <property type="evidence" value="ECO:0007669"/>
    <property type="project" value="UniProtKB-KW"/>
</dbReference>
<dbReference type="GO" id="GO:0008963">
    <property type="term" value="F:phospho-N-acetylmuramoyl-pentapeptide-transferase activity"/>
    <property type="evidence" value="ECO:0007669"/>
    <property type="project" value="UniProtKB-UniRule"/>
</dbReference>
<dbReference type="GO" id="GO:0051992">
    <property type="term" value="F:UDP-N-acetylmuramoyl-L-alanyl-D-glutamyl-meso-2,6-diaminopimelyl-D-alanyl-D-alanine:undecaprenyl-phosphate transferase activity"/>
    <property type="evidence" value="ECO:0007669"/>
    <property type="project" value="RHEA"/>
</dbReference>
<dbReference type="GO" id="GO:0051301">
    <property type="term" value="P:cell division"/>
    <property type="evidence" value="ECO:0007669"/>
    <property type="project" value="UniProtKB-KW"/>
</dbReference>
<dbReference type="GO" id="GO:0071555">
    <property type="term" value="P:cell wall organization"/>
    <property type="evidence" value="ECO:0007669"/>
    <property type="project" value="UniProtKB-KW"/>
</dbReference>
<dbReference type="GO" id="GO:0009252">
    <property type="term" value="P:peptidoglycan biosynthetic process"/>
    <property type="evidence" value="ECO:0007669"/>
    <property type="project" value="UniProtKB-UniRule"/>
</dbReference>
<dbReference type="GO" id="GO:0008360">
    <property type="term" value="P:regulation of cell shape"/>
    <property type="evidence" value="ECO:0007669"/>
    <property type="project" value="UniProtKB-KW"/>
</dbReference>
<dbReference type="CDD" id="cd06852">
    <property type="entry name" value="GT_MraY"/>
    <property type="match status" value="1"/>
</dbReference>
<dbReference type="HAMAP" id="MF_00038">
    <property type="entry name" value="MraY"/>
    <property type="match status" value="1"/>
</dbReference>
<dbReference type="InterPro" id="IPR000715">
    <property type="entry name" value="Glycosyl_transferase_4"/>
</dbReference>
<dbReference type="InterPro" id="IPR003524">
    <property type="entry name" value="PNAcMuramoyl-5peptid_Trfase"/>
</dbReference>
<dbReference type="InterPro" id="IPR018480">
    <property type="entry name" value="PNAcMuramoyl-5peptid_Trfase_CS"/>
</dbReference>
<dbReference type="NCBIfam" id="TIGR00445">
    <property type="entry name" value="mraY"/>
    <property type="match status" value="1"/>
</dbReference>
<dbReference type="PANTHER" id="PTHR22926">
    <property type="entry name" value="PHOSPHO-N-ACETYLMURAMOYL-PENTAPEPTIDE-TRANSFERASE"/>
    <property type="match status" value="1"/>
</dbReference>
<dbReference type="PANTHER" id="PTHR22926:SF5">
    <property type="entry name" value="PHOSPHO-N-ACETYLMURAMOYL-PENTAPEPTIDE-TRANSFERASE HOMOLOG"/>
    <property type="match status" value="1"/>
</dbReference>
<dbReference type="Pfam" id="PF00953">
    <property type="entry name" value="Glycos_transf_4"/>
    <property type="match status" value="1"/>
</dbReference>
<dbReference type="Pfam" id="PF10555">
    <property type="entry name" value="MraY_sig1"/>
    <property type="match status" value="1"/>
</dbReference>
<dbReference type="PROSITE" id="PS01347">
    <property type="entry name" value="MRAY_1"/>
    <property type="match status" value="1"/>
</dbReference>
<dbReference type="PROSITE" id="PS01348">
    <property type="entry name" value="MRAY_2"/>
    <property type="match status" value="1"/>
</dbReference>
<sequence>MKKSNKLLDNKKLSFYNSVNNHILVLFGLISITCVFSDFYYKTSNLTIPFIITTLVSSIITFIGIPKLKKIKIKQIIRDEGPKNHFLKQGTPTMGGIFFIPIGIIVSNILYFNQENYNIILTLSFVIIFFMFIGFIDDFLSLKKKLNTGLSSNQKILLQSLISLIFILICASNNLIPQNIQIANKVFNIGNLIYPLGIFVLLAESNSTNLTDGLDGLLSGCSVLIFTGLAISILIENPSNNSTLAPLCIAMAGACMGFLFLNKYPAKLFMGDSGSLAIGASLGGIALISNHLWSLLIMGGILAAESISVIIQVSIFKISKRVKGKGHKLFLMTPLHHHFELKGNNESLIVSSFWLITLFLVIINLIFLIKS</sequence>
<organism>
    <name type="scientific">Prochlorococcus marinus (strain NATL2A)</name>
    <dbReference type="NCBI Taxonomy" id="59920"/>
    <lineage>
        <taxon>Bacteria</taxon>
        <taxon>Bacillati</taxon>
        <taxon>Cyanobacteriota</taxon>
        <taxon>Cyanophyceae</taxon>
        <taxon>Synechococcales</taxon>
        <taxon>Prochlorococcaceae</taxon>
        <taxon>Prochlorococcus</taxon>
    </lineage>
</organism>
<name>MRAY_PROMT</name>
<gene>
    <name evidence="1" type="primary">mraY</name>
    <name type="ordered locus">PMN2A_1320</name>
</gene>
<evidence type="ECO:0000255" key="1">
    <source>
        <dbReference type="HAMAP-Rule" id="MF_00038"/>
    </source>
</evidence>
<keyword id="KW-0131">Cell cycle</keyword>
<keyword id="KW-0132">Cell division</keyword>
<keyword id="KW-0997">Cell inner membrane</keyword>
<keyword id="KW-1003">Cell membrane</keyword>
<keyword id="KW-0133">Cell shape</keyword>
<keyword id="KW-0961">Cell wall biogenesis/degradation</keyword>
<keyword id="KW-0460">Magnesium</keyword>
<keyword id="KW-0472">Membrane</keyword>
<keyword id="KW-0479">Metal-binding</keyword>
<keyword id="KW-0573">Peptidoglycan synthesis</keyword>
<keyword id="KW-1185">Reference proteome</keyword>
<keyword id="KW-0808">Transferase</keyword>
<keyword id="KW-0812">Transmembrane</keyword>
<keyword id="KW-1133">Transmembrane helix</keyword>
<feature type="chain" id="PRO_0000235467" description="Phospho-N-acetylmuramoyl-pentapeptide-transferase">
    <location>
        <begin position="1"/>
        <end position="371"/>
    </location>
</feature>
<feature type="transmembrane region" description="Helical" evidence="1">
    <location>
        <begin position="21"/>
        <end position="41"/>
    </location>
</feature>
<feature type="transmembrane region" description="Helical" evidence="1">
    <location>
        <begin position="46"/>
        <end position="66"/>
    </location>
</feature>
<feature type="transmembrane region" description="Helical" evidence="1">
    <location>
        <begin position="92"/>
        <end position="112"/>
    </location>
</feature>
<feature type="transmembrane region" description="Helical" evidence="1">
    <location>
        <begin position="119"/>
        <end position="139"/>
    </location>
</feature>
<feature type="transmembrane region" description="Helical" evidence="1">
    <location>
        <begin position="156"/>
        <end position="176"/>
    </location>
</feature>
<feature type="transmembrane region" description="Helical" evidence="1">
    <location>
        <begin position="182"/>
        <end position="202"/>
    </location>
</feature>
<feature type="transmembrane region" description="Helical" evidence="1">
    <location>
        <begin position="216"/>
        <end position="236"/>
    </location>
</feature>
<feature type="transmembrane region" description="Helical" evidence="1">
    <location>
        <begin position="241"/>
        <end position="261"/>
    </location>
</feature>
<feature type="transmembrane region" description="Helical" evidence="1">
    <location>
        <begin position="268"/>
        <end position="288"/>
    </location>
</feature>
<feature type="transmembrane region" description="Helical" evidence="1">
    <location>
        <begin position="296"/>
        <end position="316"/>
    </location>
</feature>
<feature type="transmembrane region" description="Helical" evidence="1">
    <location>
        <begin position="349"/>
        <end position="369"/>
    </location>
</feature>
<accession>Q46I69</accession>
<comment type="function">
    <text evidence="1">Catalyzes the initial step of the lipid cycle reactions in the biosynthesis of the cell wall peptidoglycan: transfers peptidoglycan precursor phospho-MurNAc-pentapeptide from UDP-MurNAc-pentapeptide onto the lipid carrier undecaprenyl phosphate, yielding undecaprenyl-pyrophosphoryl-MurNAc-pentapeptide, known as lipid I.</text>
</comment>
<comment type="catalytic activity">
    <reaction evidence="1">
        <text>UDP-N-acetyl-alpha-D-muramoyl-L-alanyl-gamma-D-glutamyl-meso-2,6-diaminopimeloyl-D-alanyl-D-alanine + di-trans,octa-cis-undecaprenyl phosphate = di-trans,octa-cis-undecaprenyl diphospho-N-acetyl-alpha-D-muramoyl-L-alanyl-D-glutamyl-meso-2,6-diaminopimeloyl-D-alanyl-D-alanine + UMP</text>
        <dbReference type="Rhea" id="RHEA:28386"/>
        <dbReference type="ChEBI" id="CHEBI:57865"/>
        <dbReference type="ChEBI" id="CHEBI:60392"/>
        <dbReference type="ChEBI" id="CHEBI:61386"/>
        <dbReference type="ChEBI" id="CHEBI:61387"/>
        <dbReference type="EC" id="2.7.8.13"/>
    </reaction>
</comment>
<comment type="cofactor">
    <cofactor evidence="1">
        <name>Mg(2+)</name>
        <dbReference type="ChEBI" id="CHEBI:18420"/>
    </cofactor>
</comment>
<comment type="pathway">
    <text evidence="1">Cell wall biogenesis; peptidoglycan biosynthesis.</text>
</comment>
<comment type="subcellular location">
    <subcellularLocation>
        <location evidence="1">Cell inner membrane</location>
        <topology evidence="1">Multi-pass membrane protein</topology>
    </subcellularLocation>
</comment>
<comment type="similarity">
    <text evidence="1">Belongs to the glycosyltransferase 4 family. MraY subfamily.</text>
</comment>
<protein>
    <recommendedName>
        <fullName evidence="1">Phospho-N-acetylmuramoyl-pentapeptide-transferase</fullName>
        <ecNumber evidence="1">2.7.8.13</ecNumber>
    </recommendedName>
    <alternativeName>
        <fullName evidence="1">UDP-MurNAc-pentapeptide phosphotransferase</fullName>
    </alternativeName>
</protein>
<proteinExistence type="inferred from homology"/>